<proteinExistence type="inferred from homology"/>
<feature type="chain" id="PRO_1000144234" description="Large ribosomal subunit protein uL14">
    <location>
        <begin position="1"/>
        <end position="122"/>
    </location>
</feature>
<dbReference type="EMBL" id="AM747720">
    <property type="protein sequence ID" value="CAR50555.1"/>
    <property type="molecule type" value="Genomic_DNA"/>
</dbReference>
<dbReference type="RefSeq" id="WP_006482918.1">
    <property type="nucleotide sequence ID" value="NC_011000.1"/>
</dbReference>
<dbReference type="SMR" id="B4E5D0"/>
<dbReference type="GeneID" id="93193441"/>
<dbReference type="KEGG" id="bcj:BCAL0244"/>
<dbReference type="eggNOG" id="COG0093">
    <property type="taxonomic scope" value="Bacteria"/>
</dbReference>
<dbReference type="HOGENOM" id="CLU_095071_2_1_4"/>
<dbReference type="BioCyc" id="BCEN216591:G1G1V-287-MONOMER"/>
<dbReference type="Proteomes" id="UP000001035">
    <property type="component" value="Chromosome 1"/>
</dbReference>
<dbReference type="GO" id="GO:0022625">
    <property type="term" value="C:cytosolic large ribosomal subunit"/>
    <property type="evidence" value="ECO:0007669"/>
    <property type="project" value="TreeGrafter"/>
</dbReference>
<dbReference type="GO" id="GO:0070180">
    <property type="term" value="F:large ribosomal subunit rRNA binding"/>
    <property type="evidence" value="ECO:0007669"/>
    <property type="project" value="TreeGrafter"/>
</dbReference>
<dbReference type="GO" id="GO:0003735">
    <property type="term" value="F:structural constituent of ribosome"/>
    <property type="evidence" value="ECO:0007669"/>
    <property type="project" value="InterPro"/>
</dbReference>
<dbReference type="GO" id="GO:0006412">
    <property type="term" value="P:translation"/>
    <property type="evidence" value="ECO:0007669"/>
    <property type="project" value="UniProtKB-UniRule"/>
</dbReference>
<dbReference type="CDD" id="cd00337">
    <property type="entry name" value="Ribosomal_uL14"/>
    <property type="match status" value="1"/>
</dbReference>
<dbReference type="FunFam" id="2.40.150.20:FF:000001">
    <property type="entry name" value="50S ribosomal protein L14"/>
    <property type="match status" value="1"/>
</dbReference>
<dbReference type="Gene3D" id="2.40.150.20">
    <property type="entry name" value="Ribosomal protein L14"/>
    <property type="match status" value="1"/>
</dbReference>
<dbReference type="HAMAP" id="MF_01367">
    <property type="entry name" value="Ribosomal_uL14"/>
    <property type="match status" value="1"/>
</dbReference>
<dbReference type="InterPro" id="IPR000218">
    <property type="entry name" value="Ribosomal_uL14"/>
</dbReference>
<dbReference type="InterPro" id="IPR005745">
    <property type="entry name" value="Ribosomal_uL14_bac-type"/>
</dbReference>
<dbReference type="InterPro" id="IPR019972">
    <property type="entry name" value="Ribosomal_uL14_CS"/>
</dbReference>
<dbReference type="InterPro" id="IPR036853">
    <property type="entry name" value="Ribosomal_uL14_sf"/>
</dbReference>
<dbReference type="NCBIfam" id="TIGR01067">
    <property type="entry name" value="rplN_bact"/>
    <property type="match status" value="1"/>
</dbReference>
<dbReference type="PANTHER" id="PTHR11761">
    <property type="entry name" value="50S/60S RIBOSOMAL PROTEIN L14/L23"/>
    <property type="match status" value="1"/>
</dbReference>
<dbReference type="PANTHER" id="PTHR11761:SF3">
    <property type="entry name" value="LARGE RIBOSOMAL SUBUNIT PROTEIN UL14M"/>
    <property type="match status" value="1"/>
</dbReference>
<dbReference type="Pfam" id="PF00238">
    <property type="entry name" value="Ribosomal_L14"/>
    <property type="match status" value="1"/>
</dbReference>
<dbReference type="SMART" id="SM01374">
    <property type="entry name" value="Ribosomal_L14"/>
    <property type="match status" value="1"/>
</dbReference>
<dbReference type="SUPFAM" id="SSF50193">
    <property type="entry name" value="Ribosomal protein L14"/>
    <property type="match status" value="1"/>
</dbReference>
<dbReference type="PROSITE" id="PS00049">
    <property type="entry name" value="RIBOSOMAL_L14"/>
    <property type="match status" value="1"/>
</dbReference>
<reference key="1">
    <citation type="journal article" date="2009" name="J. Bacteriol.">
        <title>The genome of Burkholderia cenocepacia J2315, an epidemic pathogen of cystic fibrosis patients.</title>
        <authorList>
            <person name="Holden M.T."/>
            <person name="Seth-Smith H.M."/>
            <person name="Crossman L.C."/>
            <person name="Sebaihia M."/>
            <person name="Bentley S.D."/>
            <person name="Cerdeno-Tarraga A.M."/>
            <person name="Thomson N.R."/>
            <person name="Bason N."/>
            <person name="Quail M.A."/>
            <person name="Sharp S."/>
            <person name="Cherevach I."/>
            <person name="Churcher C."/>
            <person name="Goodhead I."/>
            <person name="Hauser H."/>
            <person name="Holroyd N."/>
            <person name="Mungall K."/>
            <person name="Scott P."/>
            <person name="Walker D."/>
            <person name="White B."/>
            <person name="Rose H."/>
            <person name="Iversen P."/>
            <person name="Mil-Homens D."/>
            <person name="Rocha E.P."/>
            <person name="Fialho A.M."/>
            <person name="Baldwin A."/>
            <person name="Dowson C."/>
            <person name="Barrell B.G."/>
            <person name="Govan J.R."/>
            <person name="Vandamme P."/>
            <person name="Hart C.A."/>
            <person name="Mahenthiralingam E."/>
            <person name="Parkhill J."/>
        </authorList>
    </citation>
    <scope>NUCLEOTIDE SEQUENCE [LARGE SCALE GENOMIC DNA]</scope>
    <source>
        <strain>ATCC BAA-245 / DSM 16553 / LMG 16656 / NCTC 13227 / J2315 / CF5610</strain>
    </source>
</reference>
<accession>B4E5D0</accession>
<sequence>MIQTESRLEVADNTGAREVLCIKVLGGSKRRYAGIGDIIKVSVKEATPRGRVKKGEIYNAVVVRTAKGVRRQDGSLIKFDGNAAVLLNNKLEPIGTRIFGPVTRELRSERFMKIVSLAPEVL</sequence>
<protein>
    <recommendedName>
        <fullName evidence="1">Large ribosomal subunit protein uL14</fullName>
    </recommendedName>
    <alternativeName>
        <fullName evidence="2">50S ribosomal protein L14</fullName>
    </alternativeName>
</protein>
<gene>
    <name evidence="1" type="primary">rplN</name>
    <name type="ordered locus">BceJ2315_02470</name>
    <name type="ORF">BCAL0244</name>
</gene>
<keyword id="KW-0687">Ribonucleoprotein</keyword>
<keyword id="KW-0689">Ribosomal protein</keyword>
<keyword id="KW-0694">RNA-binding</keyword>
<keyword id="KW-0699">rRNA-binding</keyword>
<organism>
    <name type="scientific">Burkholderia cenocepacia (strain ATCC BAA-245 / DSM 16553 / LMG 16656 / NCTC 13227 / J2315 / CF5610)</name>
    <name type="common">Burkholderia cepacia (strain J2315)</name>
    <dbReference type="NCBI Taxonomy" id="216591"/>
    <lineage>
        <taxon>Bacteria</taxon>
        <taxon>Pseudomonadati</taxon>
        <taxon>Pseudomonadota</taxon>
        <taxon>Betaproteobacteria</taxon>
        <taxon>Burkholderiales</taxon>
        <taxon>Burkholderiaceae</taxon>
        <taxon>Burkholderia</taxon>
        <taxon>Burkholderia cepacia complex</taxon>
    </lineage>
</organism>
<evidence type="ECO:0000255" key="1">
    <source>
        <dbReference type="HAMAP-Rule" id="MF_01367"/>
    </source>
</evidence>
<evidence type="ECO:0000305" key="2"/>
<name>RL14_BURCJ</name>
<comment type="function">
    <text evidence="1">Binds to 23S rRNA. Forms part of two intersubunit bridges in the 70S ribosome.</text>
</comment>
<comment type="subunit">
    <text evidence="1">Part of the 50S ribosomal subunit. Forms a cluster with proteins L3 and L19. In the 70S ribosome, L14 and L19 interact and together make contacts with the 16S rRNA in bridges B5 and B8.</text>
</comment>
<comment type="similarity">
    <text evidence="1">Belongs to the universal ribosomal protein uL14 family.</text>
</comment>